<accession>A8MC03</accession>
<organism>
    <name type="scientific">Caldivirga maquilingensis (strain ATCC 700844 / DSM 13496 / JCM 10307 / IC-167)</name>
    <dbReference type="NCBI Taxonomy" id="397948"/>
    <lineage>
        <taxon>Archaea</taxon>
        <taxon>Thermoproteota</taxon>
        <taxon>Thermoprotei</taxon>
        <taxon>Thermoproteales</taxon>
        <taxon>Thermoproteaceae</taxon>
        <taxon>Caldivirga</taxon>
    </lineage>
</organism>
<reference key="1">
    <citation type="submission" date="2007-10" db="EMBL/GenBank/DDBJ databases">
        <title>Complete sequence of Caldivirga maquilingensis IC-167.</title>
        <authorList>
            <consortium name="US DOE Joint Genome Institute"/>
            <person name="Copeland A."/>
            <person name="Lucas S."/>
            <person name="Lapidus A."/>
            <person name="Barry K."/>
            <person name="Glavina del Rio T."/>
            <person name="Dalin E."/>
            <person name="Tice H."/>
            <person name="Pitluck S."/>
            <person name="Saunders E."/>
            <person name="Brettin T."/>
            <person name="Bruce D."/>
            <person name="Detter J.C."/>
            <person name="Han C."/>
            <person name="Schmutz J."/>
            <person name="Larimer F."/>
            <person name="Land M."/>
            <person name="Hauser L."/>
            <person name="Kyrpides N."/>
            <person name="Ivanova N."/>
            <person name="Biddle J.F."/>
            <person name="Zhang Z."/>
            <person name="Fitz-Gibbon S.T."/>
            <person name="Lowe T.M."/>
            <person name="Saltikov C."/>
            <person name="House C.H."/>
            <person name="Richardson P."/>
        </authorList>
    </citation>
    <scope>NUCLEOTIDE SEQUENCE [LARGE SCALE GENOMIC DNA]</scope>
    <source>
        <strain>ATCC 700844 / DSM 13496 / JCM 10307 / IC-167</strain>
    </source>
</reference>
<keyword id="KW-0963">Cytoplasm</keyword>
<keyword id="KW-0444">Lipid biosynthesis</keyword>
<keyword id="KW-0443">Lipid metabolism</keyword>
<keyword id="KW-0479">Metal-binding</keyword>
<keyword id="KW-0520">NAD</keyword>
<keyword id="KW-0521">NADP</keyword>
<keyword id="KW-0560">Oxidoreductase</keyword>
<keyword id="KW-0594">Phospholipid biosynthesis</keyword>
<keyword id="KW-1208">Phospholipid metabolism</keyword>
<keyword id="KW-1185">Reference proteome</keyword>
<keyword id="KW-0862">Zinc</keyword>
<gene>
    <name evidence="1" type="primary">egsA</name>
    <name type="ordered locus">Cmaq_1971</name>
</gene>
<protein>
    <recommendedName>
        <fullName evidence="1">Glycerol-1-phosphate dehydrogenase [NAD(P)+]</fullName>
        <shortName evidence="1">G1P dehydrogenase</shortName>
        <shortName evidence="1">G1PDH</shortName>
        <ecNumber evidence="1">1.1.1.261</ecNumber>
    </recommendedName>
    <alternativeName>
        <fullName evidence="1">Enantiomeric glycerophosphate synthase</fullName>
    </alternativeName>
    <alternativeName>
        <fullName evidence="1">sn-glycerol-1-phosphate dehydrogenase</fullName>
    </alternativeName>
</protein>
<dbReference type="EC" id="1.1.1.261" evidence="1"/>
<dbReference type="EMBL" id="CP000852">
    <property type="protein sequence ID" value="ABW02787.1"/>
    <property type="status" value="ALT_INIT"/>
    <property type="molecule type" value="Genomic_DNA"/>
</dbReference>
<dbReference type="RefSeq" id="WP_048062823.1">
    <property type="nucleotide sequence ID" value="NC_009954.1"/>
</dbReference>
<dbReference type="SMR" id="A8MC03"/>
<dbReference type="STRING" id="397948.Cmaq_1971"/>
<dbReference type="GeneID" id="5708445"/>
<dbReference type="KEGG" id="cma:Cmaq_1971"/>
<dbReference type="eggNOG" id="arCOG00982">
    <property type="taxonomic scope" value="Archaea"/>
</dbReference>
<dbReference type="HOGENOM" id="CLU_038362_0_0_2"/>
<dbReference type="UniPathway" id="UPA00940"/>
<dbReference type="Proteomes" id="UP000001137">
    <property type="component" value="Chromosome"/>
</dbReference>
<dbReference type="GO" id="GO:0005737">
    <property type="term" value="C:cytoplasm"/>
    <property type="evidence" value="ECO:0007669"/>
    <property type="project" value="UniProtKB-SubCell"/>
</dbReference>
<dbReference type="GO" id="GO:0106357">
    <property type="term" value="F:glycerol-1-phosphate dehydrogenase (NAD+) activity"/>
    <property type="evidence" value="ECO:0007669"/>
    <property type="project" value="RHEA"/>
</dbReference>
<dbReference type="GO" id="GO:0106358">
    <property type="term" value="F:glycerol-1-phosphate dehydrogenase (NADP+) activity"/>
    <property type="evidence" value="ECO:0007669"/>
    <property type="project" value="RHEA"/>
</dbReference>
<dbReference type="GO" id="GO:0046872">
    <property type="term" value="F:metal ion binding"/>
    <property type="evidence" value="ECO:0007669"/>
    <property type="project" value="UniProtKB-KW"/>
</dbReference>
<dbReference type="GO" id="GO:0006650">
    <property type="term" value="P:glycerophospholipid metabolic process"/>
    <property type="evidence" value="ECO:0007669"/>
    <property type="project" value="UniProtKB-UniRule"/>
</dbReference>
<dbReference type="GO" id="GO:0008654">
    <property type="term" value="P:phospholipid biosynthetic process"/>
    <property type="evidence" value="ECO:0007669"/>
    <property type="project" value="UniProtKB-KW"/>
</dbReference>
<dbReference type="CDD" id="cd08173">
    <property type="entry name" value="Gro1PDH"/>
    <property type="match status" value="1"/>
</dbReference>
<dbReference type="Gene3D" id="3.40.50.1970">
    <property type="match status" value="1"/>
</dbReference>
<dbReference type="Gene3D" id="1.20.1090.10">
    <property type="entry name" value="Dehydroquinate synthase-like - alpha domain"/>
    <property type="match status" value="1"/>
</dbReference>
<dbReference type="HAMAP" id="MF_00497_A">
    <property type="entry name" value="G1P_dehydrogenase_A"/>
    <property type="match status" value="1"/>
</dbReference>
<dbReference type="InterPro" id="IPR023002">
    <property type="entry name" value="G1P_dehydrogenase_arc"/>
</dbReference>
<dbReference type="InterPro" id="IPR032837">
    <property type="entry name" value="G1PDH"/>
</dbReference>
<dbReference type="InterPro" id="IPR016205">
    <property type="entry name" value="Glycerol_DH"/>
</dbReference>
<dbReference type="PANTHER" id="PTHR43616">
    <property type="entry name" value="GLYCEROL DEHYDROGENASE"/>
    <property type="match status" value="1"/>
</dbReference>
<dbReference type="PANTHER" id="PTHR43616:SF5">
    <property type="entry name" value="GLYCEROL DEHYDROGENASE 1"/>
    <property type="match status" value="1"/>
</dbReference>
<dbReference type="Pfam" id="PF13685">
    <property type="entry name" value="Fe-ADH_2"/>
    <property type="match status" value="1"/>
</dbReference>
<dbReference type="PIRSF" id="PIRSF000112">
    <property type="entry name" value="Glycerol_dehydrogenase"/>
    <property type="match status" value="1"/>
</dbReference>
<dbReference type="SUPFAM" id="SSF56796">
    <property type="entry name" value="Dehydroquinate synthase-like"/>
    <property type="match status" value="1"/>
</dbReference>
<sequence>MVKGLELFEVPRQVVFGPNAIGKVSEVLTYLGLRRGLIITGHIHSRHIASKVSEQCVDCQIISDDEIELSDVVKGMSAFSDVDFIAGVGGGRVIDVSKVIAYKLNKHLISIPTVASHDGIASPYISFLMQDDLNKLGVGKVRKTPLAIIVDTGIVAEAPRVFLLAGIGELLGKKVALMDWRLGHRIKGEDYSESAAMLALSSHMIIMNNVNKLTRHGEEETRIVVKALLGCGVAMAIAGSTRPCSGSEHLFSHSLDLLAREYGVKQAMHGMQVALSSVIMLYLHGANWRRIIKIMKMLGLPTSFKELGYDKELVVEALMNAHRIRPDRYTILGSNGLTREAAEAALEQTGVI</sequence>
<feature type="chain" id="PRO_0000350642" description="Glycerol-1-phosphate dehydrogenase [NAD(P)+]">
    <location>
        <begin position="1"/>
        <end position="352"/>
    </location>
</feature>
<feature type="binding site" evidence="1">
    <location>
        <begin position="91"/>
        <end position="95"/>
    </location>
    <ligand>
        <name>NAD(+)</name>
        <dbReference type="ChEBI" id="CHEBI:57540"/>
    </ligand>
</feature>
<feature type="binding site" evidence="1">
    <location>
        <begin position="113"/>
        <end position="116"/>
    </location>
    <ligand>
        <name>NAD(+)</name>
        <dbReference type="ChEBI" id="CHEBI:57540"/>
    </ligand>
</feature>
<feature type="binding site" evidence="1">
    <location>
        <position position="118"/>
    </location>
    <ligand>
        <name>substrate</name>
    </ligand>
</feature>
<feature type="binding site" evidence="1">
    <location>
        <position position="122"/>
    </location>
    <ligand>
        <name>NAD(+)</name>
        <dbReference type="ChEBI" id="CHEBI:57540"/>
    </ligand>
</feature>
<feature type="binding site" evidence="1">
    <location>
        <position position="169"/>
    </location>
    <ligand>
        <name>substrate</name>
    </ligand>
</feature>
<feature type="binding site" evidence="1">
    <location>
        <position position="169"/>
    </location>
    <ligand>
        <name>Zn(2+)</name>
        <dbReference type="ChEBI" id="CHEBI:29105"/>
        <note>catalytic</note>
    </ligand>
</feature>
<feature type="binding site" evidence="1">
    <location>
        <position position="249"/>
    </location>
    <ligand>
        <name>Zn(2+)</name>
        <dbReference type="ChEBI" id="CHEBI:29105"/>
        <note>catalytic</note>
    </ligand>
</feature>
<feature type="binding site" evidence="1">
    <location>
        <position position="253"/>
    </location>
    <ligand>
        <name>substrate</name>
    </ligand>
</feature>
<feature type="binding site" evidence="1">
    <location>
        <position position="269"/>
    </location>
    <ligand>
        <name>Zn(2+)</name>
        <dbReference type="ChEBI" id="CHEBI:29105"/>
        <note>catalytic</note>
    </ligand>
</feature>
<proteinExistence type="inferred from homology"/>
<comment type="function">
    <text evidence="1">Catalyzes the NAD(P)H-dependent reduction of dihydroxyacetonephosphate (DHAP or glycerone phosphate) to glycerol 1-phosphate (G1P). The G1P thus generated is used as the glycerophosphate backbone of phospholipids in the cellular membranes of Archaea.</text>
</comment>
<comment type="catalytic activity">
    <reaction evidence="1">
        <text>sn-glycerol 1-phosphate + NAD(+) = dihydroxyacetone phosphate + NADH + H(+)</text>
        <dbReference type="Rhea" id="RHEA:21412"/>
        <dbReference type="ChEBI" id="CHEBI:15378"/>
        <dbReference type="ChEBI" id="CHEBI:57540"/>
        <dbReference type="ChEBI" id="CHEBI:57642"/>
        <dbReference type="ChEBI" id="CHEBI:57685"/>
        <dbReference type="ChEBI" id="CHEBI:57945"/>
        <dbReference type="EC" id="1.1.1.261"/>
    </reaction>
</comment>
<comment type="catalytic activity">
    <reaction evidence="1">
        <text>sn-glycerol 1-phosphate + NADP(+) = dihydroxyacetone phosphate + NADPH + H(+)</text>
        <dbReference type="Rhea" id="RHEA:21416"/>
        <dbReference type="ChEBI" id="CHEBI:15378"/>
        <dbReference type="ChEBI" id="CHEBI:57642"/>
        <dbReference type="ChEBI" id="CHEBI:57685"/>
        <dbReference type="ChEBI" id="CHEBI:57783"/>
        <dbReference type="ChEBI" id="CHEBI:58349"/>
        <dbReference type="EC" id="1.1.1.261"/>
    </reaction>
</comment>
<comment type="cofactor">
    <cofactor evidence="1">
        <name>Zn(2+)</name>
        <dbReference type="ChEBI" id="CHEBI:29105"/>
    </cofactor>
    <text evidence="1">Binds 1 zinc ion per subunit.</text>
</comment>
<comment type="pathway">
    <text evidence="1">Membrane lipid metabolism; glycerophospholipid metabolism.</text>
</comment>
<comment type="subunit">
    <text evidence="1">Homodimer.</text>
</comment>
<comment type="subcellular location">
    <subcellularLocation>
        <location evidence="1">Cytoplasm</location>
    </subcellularLocation>
</comment>
<comment type="similarity">
    <text evidence="1">Belongs to the glycerol-1-phosphate dehydrogenase family.</text>
</comment>
<comment type="sequence caution" evidence="2">
    <conflict type="erroneous initiation">
        <sequence resource="EMBL-CDS" id="ABW02787"/>
    </conflict>
</comment>
<evidence type="ECO:0000255" key="1">
    <source>
        <dbReference type="HAMAP-Rule" id="MF_00497"/>
    </source>
</evidence>
<evidence type="ECO:0000305" key="2"/>
<name>G1PDH_CALMQ</name>